<evidence type="ECO:0000255" key="1">
    <source>
        <dbReference type="HAMAP-Rule" id="MF_01367"/>
    </source>
</evidence>
<evidence type="ECO:0000305" key="2"/>
<accession>A2T370</accession>
<dbReference type="EMBL" id="DQ821119">
    <property type="protein sequence ID" value="ABG79637.1"/>
    <property type="molecule type" value="Genomic_DNA"/>
</dbReference>
<dbReference type="RefSeq" id="YP_001023738.1">
    <property type="nucleotide sequence ID" value="NC_008829.1"/>
</dbReference>
<dbReference type="SMR" id="A2T370"/>
<dbReference type="GeneID" id="4788269"/>
<dbReference type="GO" id="GO:0009507">
    <property type="term" value="C:chloroplast"/>
    <property type="evidence" value="ECO:0007669"/>
    <property type="project" value="UniProtKB-SubCell"/>
</dbReference>
<dbReference type="GO" id="GO:0022625">
    <property type="term" value="C:cytosolic large ribosomal subunit"/>
    <property type="evidence" value="ECO:0007669"/>
    <property type="project" value="TreeGrafter"/>
</dbReference>
<dbReference type="GO" id="GO:0070180">
    <property type="term" value="F:large ribosomal subunit rRNA binding"/>
    <property type="evidence" value="ECO:0007669"/>
    <property type="project" value="TreeGrafter"/>
</dbReference>
<dbReference type="GO" id="GO:0003735">
    <property type="term" value="F:structural constituent of ribosome"/>
    <property type="evidence" value="ECO:0007669"/>
    <property type="project" value="InterPro"/>
</dbReference>
<dbReference type="GO" id="GO:0006412">
    <property type="term" value="P:translation"/>
    <property type="evidence" value="ECO:0007669"/>
    <property type="project" value="UniProtKB-UniRule"/>
</dbReference>
<dbReference type="CDD" id="cd00337">
    <property type="entry name" value="Ribosomal_uL14"/>
    <property type="match status" value="1"/>
</dbReference>
<dbReference type="FunFam" id="2.40.150.20:FF:000002">
    <property type="entry name" value="50S ribosomal protein L14, chloroplastic"/>
    <property type="match status" value="1"/>
</dbReference>
<dbReference type="Gene3D" id="2.40.150.20">
    <property type="entry name" value="Ribosomal protein L14"/>
    <property type="match status" value="1"/>
</dbReference>
<dbReference type="HAMAP" id="MF_01367">
    <property type="entry name" value="Ribosomal_uL14"/>
    <property type="match status" value="1"/>
</dbReference>
<dbReference type="InterPro" id="IPR000218">
    <property type="entry name" value="Ribosomal_uL14"/>
</dbReference>
<dbReference type="InterPro" id="IPR005745">
    <property type="entry name" value="Ribosomal_uL14_bac-type"/>
</dbReference>
<dbReference type="InterPro" id="IPR019972">
    <property type="entry name" value="Ribosomal_uL14_CS"/>
</dbReference>
<dbReference type="InterPro" id="IPR036853">
    <property type="entry name" value="Ribosomal_uL14_sf"/>
</dbReference>
<dbReference type="NCBIfam" id="TIGR01067">
    <property type="entry name" value="rplN_bact"/>
    <property type="match status" value="1"/>
</dbReference>
<dbReference type="PANTHER" id="PTHR11761">
    <property type="entry name" value="50S/60S RIBOSOMAL PROTEIN L14/L23"/>
    <property type="match status" value="1"/>
</dbReference>
<dbReference type="PANTHER" id="PTHR11761:SF3">
    <property type="entry name" value="LARGE RIBOSOMAL SUBUNIT PROTEIN UL14M"/>
    <property type="match status" value="1"/>
</dbReference>
<dbReference type="Pfam" id="PF00238">
    <property type="entry name" value="Ribosomal_L14"/>
    <property type="match status" value="1"/>
</dbReference>
<dbReference type="SMART" id="SM01374">
    <property type="entry name" value="Ribosomal_L14"/>
    <property type="match status" value="1"/>
</dbReference>
<dbReference type="SUPFAM" id="SSF50193">
    <property type="entry name" value="Ribosomal protein L14"/>
    <property type="match status" value="1"/>
</dbReference>
<dbReference type="PROSITE" id="PS00049">
    <property type="entry name" value="RIBOSOMAL_L14"/>
    <property type="match status" value="1"/>
</dbReference>
<comment type="function">
    <text evidence="1">Binds to 23S rRNA.</text>
</comment>
<comment type="subunit">
    <text evidence="1">Part of the 50S ribosomal subunit.</text>
</comment>
<comment type="subcellular location">
    <subcellularLocation>
        <location>Plastid</location>
        <location>Chloroplast</location>
    </subcellularLocation>
</comment>
<comment type="similarity">
    <text evidence="1">Belongs to the universal ribosomal protein uL14 family.</text>
</comment>
<protein>
    <recommendedName>
        <fullName evidence="1">Large ribosomal subunit protein uL14c</fullName>
    </recommendedName>
    <alternativeName>
        <fullName evidence="2">50S ribosomal protein L14, chloroplastic</fullName>
    </alternativeName>
</protein>
<feature type="chain" id="PRO_0000355859" description="Large ribosomal subunit protein uL14c">
    <location>
        <begin position="1"/>
        <end position="122"/>
    </location>
</feature>
<keyword id="KW-0150">Chloroplast</keyword>
<keyword id="KW-0934">Plastid</keyword>
<keyword id="KW-0687">Ribonucleoprotein</keyword>
<keyword id="KW-0689">Ribosomal protein</keyword>
<keyword id="KW-0694">RNA-binding</keyword>
<keyword id="KW-0699">rRNA-binding</keyword>
<name>RK14_ANGEV</name>
<geneLocation type="chloroplast"/>
<organism>
    <name type="scientific">Angiopteris evecta</name>
    <name type="common">Mule's foot fern</name>
    <name type="synonym">Polypodium evectum</name>
    <dbReference type="NCBI Taxonomy" id="13825"/>
    <lineage>
        <taxon>Eukaryota</taxon>
        <taxon>Viridiplantae</taxon>
        <taxon>Streptophyta</taxon>
        <taxon>Embryophyta</taxon>
        <taxon>Tracheophyta</taxon>
        <taxon>Polypodiopsida</taxon>
        <taxon>Marattiidae</taxon>
        <taxon>Marattiales</taxon>
        <taxon>Marattiaceae</taxon>
        <taxon>Angiopteris</taxon>
    </lineage>
</organism>
<sequence>MIQPQSYLNVADNSGARKLMCIRVLGTSDREYADTGDVIVAVVKEAVPNMPLKKSEVVRAVVVRTCKELKRDNGMRIRFDDNAAVVINQEGNPRGTRVFGPIARELREYNFTKIISLAPEVL</sequence>
<gene>
    <name evidence="1" type="primary">rpl14</name>
</gene>
<reference key="1">
    <citation type="journal article" date="2007" name="Am. Fern J.">
        <title>The complete plastid genome sequence of Angiopteris evecta (G. Forst.) Hoffm. (Marattiaceae).</title>
        <authorList>
            <person name="Roper J.M."/>
            <person name="Hansen S.K."/>
            <person name="Wolf P.G."/>
            <person name="Karol K.G."/>
            <person name="Mandoli D.F."/>
            <person name="Everett K.D.E."/>
            <person name="Kuehl J.V."/>
            <person name="Boore J.L."/>
        </authorList>
    </citation>
    <scope>NUCLEOTIDE SEQUENCE [LARGE SCALE GENOMIC DNA]</scope>
</reference>
<proteinExistence type="inferred from homology"/>